<keyword id="KW-0051">Antiviral defense</keyword>
<keyword id="KW-0202">Cytokine</keyword>
<keyword id="KW-0325">Glycoprotein</keyword>
<keyword id="KW-0341">Growth regulation</keyword>
<keyword id="KW-0873">Pyrrolidone carboxylic acid</keyword>
<keyword id="KW-1185">Reference proteome</keyword>
<keyword id="KW-0964">Secreted</keyword>
<keyword id="KW-0732">Signal</keyword>
<reference key="1">
    <citation type="submission" date="1998-03" db="EMBL/GenBank/DDBJ databases">
        <title>Nucleotide sequence of the donkey interferon gamma cDNA.</title>
        <authorList>
            <person name="Burr P.D."/>
            <person name="Nasir L."/>
            <person name="Nicolson L."/>
            <person name="Argyle D.J."/>
            <person name="Reid S.W.J."/>
        </authorList>
    </citation>
    <scope>NUCLEOTIDE SEQUENCE [MRNA]</scope>
</reference>
<dbReference type="EMBL" id="AF055341">
    <property type="protein sequence ID" value="AAC42595.1"/>
    <property type="molecule type" value="mRNA"/>
</dbReference>
<dbReference type="RefSeq" id="XP_014716180.1">
    <property type="nucleotide sequence ID" value="XM_014860694.3"/>
</dbReference>
<dbReference type="SMR" id="O77763"/>
<dbReference type="GlyCosmos" id="O77763">
    <property type="glycosylation" value="2 sites, No reported glycans"/>
</dbReference>
<dbReference type="Ensembl" id="ENSEAST00005012374.2">
    <property type="protein sequence ID" value="ENSEASP00005011380.1"/>
    <property type="gene ID" value="ENSEASG00005007999.2"/>
</dbReference>
<dbReference type="GeneID" id="106843591"/>
<dbReference type="KEGG" id="eai:106843591"/>
<dbReference type="CTD" id="3458"/>
<dbReference type="GeneTree" id="ENSGT00390000007831"/>
<dbReference type="OMA" id="QIVSMYL"/>
<dbReference type="OrthoDB" id="133331at314145"/>
<dbReference type="Proteomes" id="UP000694387">
    <property type="component" value="Chromosome 22"/>
</dbReference>
<dbReference type="GO" id="GO:0005615">
    <property type="term" value="C:extracellular space"/>
    <property type="evidence" value="ECO:0007669"/>
    <property type="project" value="UniProtKB-KW"/>
</dbReference>
<dbReference type="GO" id="GO:0005125">
    <property type="term" value="F:cytokine activity"/>
    <property type="evidence" value="ECO:0007669"/>
    <property type="project" value="UniProtKB-KW"/>
</dbReference>
<dbReference type="GO" id="GO:0005133">
    <property type="term" value="F:type II interferon receptor binding"/>
    <property type="evidence" value="ECO:0007669"/>
    <property type="project" value="InterPro"/>
</dbReference>
<dbReference type="GO" id="GO:0002250">
    <property type="term" value="P:adaptive immune response"/>
    <property type="evidence" value="ECO:0007669"/>
    <property type="project" value="TreeGrafter"/>
</dbReference>
<dbReference type="GO" id="GO:0048143">
    <property type="term" value="P:astrocyte activation"/>
    <property type="evidence" value="ECO:0007669"/>
    <property type="project" value="Ensembl"/>
</dbReference>
<dbReference type="GO" id="GO:0097696">
    <property type="term" value="P:cell surface receptor signaling pathway via STAT"/>
    <property type="evidence" value="ECO:0007669"/>
    <property type="project" value="Ensembl"/>
</dbReference>
<dbReference type="GO" id="GO:0051607">
    <property type="term" value="P:defense response to virus"/>
    <property type="evidence" value="ECO:0007669"/>
    <property type="project" value="UniProtKB-KW"/>
</dbReference>
<dbReference type="GO" id="GO:0097191">
    <property type="term" value="P:extrinsic apoptotic signaling pathway"/>
    <property type="evidence" value="ECO:0007669"/>
    <property type="project" value="Ensembl"/>
</dbReference>
<dbReference type="GO" id="GO:0038096">
    <property type="term" value="P:Fc-gamma receptor signaling pathway involved in phagocytosis"/>
    <property type="evidence" value="ECO:0007669"/>
    <property type="project" value="Ensembl"/>
</dbReference>
<dbReference type="GO" id="GO:0006959">
    <property type="term" value="P:humoral immune response"/>
    <property type="evidence" value="ECO:0007669"/>
    <property type="project" value="TreeGrafter"/>
</dbReference>
<dbReference type="GO" id="GO:0002281">
    <property type="term" value="P:macrophage activation involved in immune response"/>
    <property type="evidence" value="ECO:0007669"/>
    <property type="project" value="Ensembl"/>
</dbReference>
<dbReference type="GO" id="GO:0030225">
    <property type="term" value="P:macrophage differentiation"/>
    <property type="evidence" value="ECO:0007669"/>
    <property type="project" value="Ensembl"/>
</dbReference>
<dbReference type="GO" id="GO:0001774">
    <property type="term" value="P:microglial cell activation"/>
    <property type="evidence" value="ECO:0007669"/>
    <property type="project" value="Ensembl"/>
</dbReference>
<dbReference type="GO" id="GO:0045892">
    <property type="term" value="P:negative regulation of DNA-templated transcription"/>
    <property type="evidence" value="ECO:0007669"/>
    <property type="project" value="Ensembl"/>
</dbReference>
<dbReference type="GO" id="GO:0032700">
    <property type="term" value="P:negative regulation of interleukin-17 production"/>
    <property type="evidence" value="ECO:0007669"/>
    <property type="project" value="Ensembl"/>
</dbReference>
<dbReference type="GO" id="GO:0048662">
    <property type="term" value="P:negative regulation of smooth muscle cell proliferation"/>
    <property type="evidence" value="ECO:0007669"/>
    <property type="project" value="Ensembl"/>
</dbReference>
<dbReference type="GO" id="GO:1902004">
    <property type="term" value="P:positive regulation of amyloid-beta formation"/>
    <property type="evidence" value="ECO:0007669"/>
    <property type="project" value="Ensembl"/>
</dbReference>
<dbReference type="GO" id="GO:0010508">
    <property type="term" value="P:positive regulation of autophagy"/>
    <property type="evidence" value="ECO:0007669"/>
    <property type="project" value="Ensembl"/>
</dbReference>
<dbReference type="GO" id="GO:0032834">
    <property type="term" value="P:positive regulation of CD4-positive, CD25-positive, alpha-beta regulatory T cell differentiation involved in immune response"/>
    <property type="evidence" value="ECO:0007669"/>
    <property type="project" value="Ensembl"/>
</dbReference>
<dbReference type="GO" id="GO:0032722">
    <property type="term" value="P:positive regulation of chemokine production"/>
    <property type="evidence" value="ECO:0007669"/>
    <property type="project" value="Ensembl"/>
</dbReference>
<dbReference type="GO" id="GO:0010634">
    <property type="term" value="P:positive regulation of epithelial cell migration"/>
    <property type="evidence" value="ECO:0007669"/>
    <property type="project" value="Ensembl"/>
</dbReference>
<dbReference type="GO" id="GO:0060552">
    <property type="term" value="P:positive regulation of fructose 1,6-bisphosphate metabolic process"/>
    <property type="evidence" value="ECO:0007669"/>
    <property type="project" value="Ensembl"/>
</dbReference>
<dbReference type="GO" id="GO:0050729">
    <property type="term" value="P:positive regulation of inflammatory response"/>
    <property type="evidence" value="ECO:0007669"/>
    <property type="project" value="Ensembl"/>
</dbReference>
<dbReference type="GO" id="GO:0032735">
    <property type="term" value="P:positive regulation of interleukin-12 production"/>
    <property type="evidence" value="ECO:0007669"/>
    <property type="project" value="Ensembl"/>
</dbReference>
<dbReference type="GO" id="GO:0032747">
    <property type="term" value="P:positive regulation of interleukin-23 production"/>
    <property type="evidence" value="ECO:0007669"/>
    <property type="project" value="Ensembl"/>
</dbReference>
<dbReference type="GO" id="GO:0032755">
    <property type="term" value="P:positive regulation of interleukin-6 production"/>
    <property type="evidence" value="ECO:0007669"/>
    <property type="project" value="Ensembl"/>
</dbReference>
<dbReference type="GO" id="GO:0051044">
    <property type="term" value="P:positive regulation of membrane protein ectodomain proteolysis"/>
    <property type="evidence" value="ECO:0007669"/>
    <property type="project" value="Ensembl"/>
</dbReference>
<dbReference type="GO" id="GO:0050769">
    <property type="term" value="P:positive regulation of neurogenesis"/>
    <property type="evidence" value="ECO:0007669"/>
    <property type="project" value="Ensembl"/>
</dbReference>
<dbReference type="GO" id="GO:0045429">
    <property type="term" value="P:positive regulation of nitric oxide biosynthetic process"/>
    <property type="evidence" value="ECO:0007669"/>
    <property type="project" value="Ensembl"/>
</dbReference>
<dbReference type="GO" id="GO:0045672">
    <property type="term" value="P:positive regulation of osteoclast differentiation"/>
    <property type="evidence" value="ECO:0007669"/>
    <property type="project" value="Ensembl"/>
</dbReference>
<dbReference type="GO" id="GO:0042307">
    <property type="term" value="P:positive regulation of protein import into nucleus"/>
    <property type="evidence" value="ECO:0007669"/>
    <property type="project" value="Ensembl"/>
</dbReference>
<dbReference type="GO" id="GO:0031334">
    <property type="term" value="P:positive regulation of protein-containing complex assembly"/>
    <property type="evidence" value="ECO:0007669"/>
    <property type="project" value="Ensembl"/>
</dbReference>
<dbReference type="GO" id="GO:0034393">
    <property type="term" value="P:positive regulation of smooth muscle cell apoptotic process"/>
    <property type="evidence" value="ECO:0007669"/>
    <property type="project" value="Ensembl"/>
</dbReference>
<dbReference type="GO" id="GO:2000309">
    <property type="term" value="P:positive regulation of tumor necrosis factor (ligand) superfamily member 11 production"/>
    <property type="evidence" value="ECO:0007669"/>
    <property type="project" value="Ensembl"/>
</dbReference>
<dbReference type="GO" id="GO:0060557">
    <property type="term" value="P:positive regulation of vitamin D biosynthetic process"/>
    <property type="evidence" value="ECO:0007669"/>
    <property type="project" value="Ensembl"/>
</dbReference>
<dbReference type="GO" id="GO:0050796">
    <property type="term" value="P:regulation of insulin secretion"/>
    <property type="evidence" value="ECO:0007669"/>
    <property type="project" value="Ensembl"/>
</dbReference>
<dbReference type="GO" id="GO:0060333">
    <property type="term" value="P:type II interferon-mediated signaling pathway"/>
    <property type="evidence" value="ECO:0007669"/>
    <property type="project" value="Ensembl"/>
</dbReference>
<dbReference type="GO" id="GO:0038196">
    <property type="term" value="P:type III interferon-mediated signaling pathway"/>
    <property type="evidence" value="ECO:0007669"/>
    <property type="project" value="Ensembl"/>
</dbReference>
<dbReference type="FunFam" id="1.20.1250.10:FF:000007">
    <property type="entry name" value="Interferon gamma"/>
    <property type="match status" value="1"/>
</dbReference>
<dbReference type="Gene3D" id="1.20.1250.10">
    <property type="match status" value="1"/>
</dbReference>
<dbReference type="InterPro" id="IPR009079">
    <property type="entry name" value="4_helix_cytokine-like_core"/>
</dbReference>
<dbReference type="InterPro" id="IPR002069">
    <property type="entry name" value="Interferon_gamma"/>
</dbReference>
<dbReference type="PANTHER" id="PTHR11419">
    <property type="entry name" value="INTERFERON GAMMA"/>
    <property type="match status" value="1"/>
</dbReference>
<dbReference type="PANTHER" id="PTHR11419:SF0">
    <property type="entry name" value="INTERFERON GAMMA"/>
    <property type="match status" value="1"/>
</dbReference>
<dbReference type="Pfam" id="PF00714">
    <property type="entry name" value="IFN-gamma"/>
    <property type="match status" value="1"/>
</dbReference>
<dbReference type="PIRSF" id="PIRSF001936">
    <property type="entry name" value="IFN-gamma"/>
    <property type="match status" value="1"/>
</dbReference>
<dbReference type="SUPFAM" id="SSF47266">
    <property type="entry name" value="4-helical cytokines"/>
    <property type="match status" value="1"/>
</dbReference>
<name>IFNG_EQUAS</name>
<sequence>MNYTSFILAFQLCAILGSSTYYCQAAFFKEIENLKEYFNASSPDVGDGGPLFLDILKNWKEDSDKKIIQSQIVSFYFKLFENLKDNQVIQKSMDTIKEDLFVKFFNSSTSKLEDFQKLIQIPVNDLKVQRKAISELIKVMNDLSPKANLRKRKRSQNPFRGRRALQ</sequence>
<evidence type="ECO:0000250" key="1"/>
<evidence type="ECO:0000250" key="2">
    <source>
        <dbReference type="UniProtKB" id="P01579"/>
    </source>
</evidence>
<evidence type="ECO:0000250" key="3">
    <source>
        <dbReference type="UniProtKB" id="P01580"/>
    </source>
</evidence>
<evidence type="ECO:0000255" key="4"/>
<evidence type="ECO:0000256" key="5">
    <source>
        <dbReference type="SAM" id="MobiDB-lite"/>
    </source>
</evidence>
<evidence type="ECO:0000305" key="6"/>
<gene>
    <name type="primary">IFNG</name>
</gene>
<feature type="signal peptide" evidence="1">
    <location>
        <begin position="1"/>
        <end position="23"/>
    </location>
</feature>
<feature type="chain" id="PRO_0000016441" description="Interferon gamma">
    <location>
        <begin position="24"/>
        <end position="166"/>
    </location>
</feature>
<feature type="region of interest" description="Disordered" evidence="5">
    <location>
        <begin position="147"/>
        <end position="166"/>
    </location>
</feature>
<feature type="compositionally biased region" description="Basic residues" evidence="5">
    <location>
        <begin position="148"/>
        <end position="166"/>
    </location>
</feature>
<feature type="modified residue" description="Pyrrolidone carboxylic acid" evidence="2">
    <location>
        <position position="24"/>
    </location>
</feature>
<feature type="glycosylation site" description="N-linked (GlcNAc...) asparagine" evidence="4">
    <location>
        <position position="39"/>
    </location>
</feature>
<feature type="glycosylation site" description="N-linked (GlcNAc...) asparagine" evidence="4">
    <location>
        <position position="106"/>
    </location>
</feature>
<proteinExistence type="evidence at transcript level"/>
<protein>
    <recommendedName>
        <fullName>Interferon gamma</fullName>
        <shortName>IFN-gamma</shortName>
    </recommendedName>
</protein>
<comment type="function">
    <text evidence="2 3">Type II interferon produced by immune cells such as T-cells and NK cells that plays crucial roles in antimicrobial, antiviral, and antitumor responses by activating effector immune cells and enhancing antigen presentation. Primarily signals through the JAK-STAT pathway after interaction with its receptor IFNGR1 to affect gene regulation. Upon IFNG binding, IFNGR1 intracellular domain opens out to allow association of downstream signaling components JAK2, JAK1 and STAT1, leading to STAT1 activation, nuclear translocation and transcription of IFNG-regulated genes. Many of the induced genes are transcription factors such as IRF1 that are able to further drive regulation of a next wave of transcription. Plays a role in class I antigen presentation pathway by inducing a replacement of catalytic proteasome subunits with immunoproteasome subunits. In turn, increases the quantity, quality, and repertoire of peptides for class I MHC loading. Increases the efficiency of peptide generation also by inducing the expression of activator PA28 that associates with the proteasome and alters its proteolytic cleavage preference. Up-regulates as well MHC II complexes on the cell surface by promoting expression of several key molecules such as cathepsins B/CTSB, H/CTSH, and L/CTSL (By similarity). Participates in the regulation of hematopoietic stem cells during development and under homeostatic conditions by affecting their development, quiescence, and differentiation (By similarity).</text>
</comment>
<comment type="subunit">
    <text evidence="2">Homodimer. Interacts with IFNGR1 (via extracellular domain); this interaction promotes IFNGR1 dimerization.</text>
</comment>
<comment type="subcellular location">
    <subcellularLocation>
        <location evidence="2">Secreted</location>
    </subcellularLocation>
</comment>
<comment type="tissue specificity">
    <text>Released primarily from activated T lymphocytes.</text>
</comment>
<comment type="similarity">
    <text evidence="6">Belongs to the type II (or gamma) interferon family.</text>
</comment>
<organism>
    <name type="scientific">Equus asinus</name>
    <name type="common">Donkey</name>
    <name type="synonym">Equus africanus asinus</name>
    <dbReference type="NCBI Taxonomy" id="9793"/>
    <lineage>
        <taxon>Eukaryota</taxon>
        <taxon>Metazoa</taxon>
        <taxon>Chordata</taxon>
        <taxon>Craniata</taxon>
        <taxon>Vertebrata</taxon>
        <taxon>Euteleostomi</taxon>
        <taxon>Mammalia</taxon>
        <taxon>Eutheria</taxon>
        <taxon>Laurasiatheria</taxon>
        <taxon>Perissodactyla</taxon>
        <taxon>Equidae</taxon>
        <taxon>Equus</taxon>
    </lineage>
</organism>
<accession>O77763</accession>